<reference key="1">
    <citation type="journal article" date="2009" name="PLoS Genet.">
        <title>Organised genome dynamics in the Escherichia coli species results in highly diverse adaptive paths.</title>
        <authorList>
            <person name="Touchon M."/>
            <person name="Hoede C."/>
            <person name="Tenaillon O."/>
            <person name="Barbe V."/>
            <person name="Baeriswyl S."/>
            <person name="Bidet P."/>
            <person name="Bingen E."/>
            <person name="Bonacorsi S."/>
            <person name="Bouchier C."/>
            <person name="Bouvet O."/>
            <person name="Calteau A."/>
            <person name="Chiapello H."/>
            <person name="Clermont O."/>
            <person name="Cruveiller S."/>
            <person name="Danchin A."/>
            <person name="Diard M."/>
            <person name="Dossat C."/>
            <person name="Karoui M.E."/>
            <person name="Frapy E."/>
            <person name="Garry L."/>
            <person name="Ghigo J.M."/>
            <person name="Gilles A.M."/>
            <person name="Johnson J."/>
            <person name="Le Bouguenec C."/>
            <person name="Lescat M."/>
            <person name="Mangenot S."/>
            <person name="Martinez-Jehanne V."/>
            <person name="Matic I."/>
            <person name="Nassif X."/>
            <person name="Oztas S."/>
            <person name="Petit M.A."/>
            <person name="Pichon C."/>
            <person name="Rouy Z."/>
            <person name="Ruf C.S."/>
            <person name="Schneider D."/>
            <person name="Tourret J."/>
            <person name="Vacherie B."/>
            <person name="Vallenet D."/>
            <person name="Medigue C."/>
            <person name="Rocha E.P.C."/>
            <person name="Denamur E."/>
        </authorList>
    </citation>
    <scope>NUCLEOTIDE SEQUENCE [LARGE SCALE GENOMIC DNA]</scope>
    <source>
        <strain>UMN026 / ExPEC</strain>
    </source>
</reference>
<accession>B7NFV2</accession>
<organism>
    <name type="scientific">Escherichia coli O17:K52:H18 (strain UMN026 / ExPEC)</name>
    <dbReference type="NCBI Taxonomy" id="585056"/>
    <lineage>
        <taxon>Bacteria</taxon>
        <taxon>Pseudomonadati</taxon>
        <taxon>Pseudomonadota</taxon>
        <taxon>Gammaproteobacteria</taxon>
        <taxon>Enterobacterales</taxon>
        <taxon>Enterobacteriaceae</taxon>
        <taxon>Escherichia</taxon>
    </lineage>
</organism>
<name>ACEK_ECOLU</name>
<comment type="function">
    <text evidence="1">Bifunctional enzyme which can phosphorylate or dephosphorylate isocitrate dehydrogenase (IDH) on a specific serine residue. This is a regulatory mechanism which enables bacteria to bypass the Krebs cycle via the glyoxylate shunt in response to the source of carbon. When bacteria are grown on glucose, IDH is fully active and unphosphorylated, but when grown on acetate or ethanol, the activity of IDH declines drastically concomitant with its phosphorylation.</text>
</comment>
<comment type="catalytic activity">
    <reaction evidence="1">
        <text>L-seryl-[isocitrate dehydrogenase] + ATP = O-phospho-L-seryl-[isocitrate dehydrogenase] + ADP + H(+)</text>
        <dbReference type="Rhea" id="RHEA:43540"/>
        <dbReference type="Rhea" id="RHEA-COMP:10605"/>
        <dbReference type="Rhea" id="RHEA-COMP:10606"/>
        <dbReference type="ChEBI" id="CHEBI:15378"/>
        <dbReference type="ChEBI" id="CHEBI:29999"/>
        <dbReference type="ChEBI" id="CHEBI:30616"/>
        <dbReference type="ChEBI" id="CHEBI:83421"/>
        <dbReference type="ChEBI" id="CHEBI:456216"/>
        <dbReference type="EC" id="2.7.11.5"/>
    </reaction>
</comment>
<comment type="subcellular location">
    <subcellularLocation>
        <location evidence="1">Cytoplasm</location>
    </subcellularLocation>
</comment>
<comment type="similarity">
    <text evidence="1">Belongs to the AceK family.</text>
</comment>
<dbReference type="EC" id="2.7.11.5" evidence="1"/>
<dbReference type="EC" id="3.1.3.-" evidence="1"/>
<dbReference type="EMBL" id="CU928163">
    <property type="protein sequence ID" value="CAR15659.1"/>
    <property type="molecule type" value="Genomic_DNA"/>
</dbReference>
<dbReference type="RefSeq" id="WP_001137230.1">
    <property type="nucleotide sequence ID" value="NC_011751.1"/>
</dbReference>
<dbReference type="RefSeq" id="YP_002415149.1">
    <property type="nucleotide sequence ID" value="NC_011751.1"/>
</dbReference>
<dbReference type="SMR" id="B7NFV2"/>
<dbReference type="STRING" id="585056.ECUMN_4542"/>
<dbReference type="KEGG" id="eum:ECUMN_4542"/>
<dbReference type="PATRIC" id="fig|585056.7.peg.4706"/>
<dbReference type="HOGENOM" id="CLU_033804_1_1_6"/>
<dbReference type="Proteomes" id="UP000007097">
    <property type="component" value="Chromosome"/>
</dbReference>
<dbReference type="GO" id="GO:0005737">
    <property type="term" value="C:cytoplasm"/>
    <property type="evidence" value="ECO:0007669"/>
    <property type="project" value="UniProtKB-SubCell"/>
</dbReference>
<dbReference type="GO" id="GO:0008772">
    <property type="term" value="F:[isocitrate dehydrogenase (NADP+)] kinase activity"/>
    <property type="evidence" value="ECO:0007669"/>
    <property type="project" value="UniProtKB-UniRule"/>
</dbReference>
<dbReference type="GO" id="GO:0016208">
    <property type="term" value="F:AMP binding"/>
    <property type="evidence" value="ECO:0007669"/>
    <property type="project" value="TreeGrafter"/>
</dbReference>
<dbReference type="GO" id="GO:0005524">
    <property type="term" value="F:ATP binding"/>
    <property type="evidence" value="ECO:0007669"/>
    <property type="project" value="UniProtKB-UniRule"/>
</dbReference>
<dbReference type="GO" id="GO:0004721">
    <property type="term" value="F:phosphoprotein phosphatase activity"/>
    <property type="evidence" value="ECO:0007669"/>
    <property type="project" value="UniProtKB-KW"/>
</dbReference>
<dbReference type="GO" id="GO:0004674">
    <property type="term" value="F:protein serine/threonine kinase activity"/>
    <property type="evidence" value="ECO:0007669"/>
    <property type="project" value="UniProtKB-KW"/>
</dbReference>
<dbReference type="GO" id="GO:0006006">
    <property type="term" value="P:glucose metabolic process"/>
    <property type="evidence" value="ECO:0007669"/>
    <property type="project" value="InterPro"/>
</dbReference>
<dbReference type="GO" id="GO:0006097">
    <property type="term" value="P:glyoxylate cycle"/>
    <property type="evidence" value="ECO:0007669"/>
    <property type="project" value="UniProtKB-UniRule"/>
</dbReference>
<dbReference type="GO" id="GO:0006099">
    <property type="term" value="P:tricarboxylic acid cycle"/>
    <property type="evidence" value="ECO:0007669"/>
    <property type="project" value="UniProtKB-UniRule"/>
</dbReference>
<dbReference type="HAMAP" id="MF_00747">
    <property type="entry name" value="AceK"/>
    <property type="match status" value="1"/>
</dbReference>
<dbReference type="InterPro" id="IPR046855">
    <property type="entry name" value="AceK_kinase"/>
</dbReference>
<dbReference type="InterPro" id="IPR046854">
    <property type="entry name" value="AceK_regulatory"/>
</dbReference>
<dbReference type="InterPro" id="IPR010452">
    <property type="entry name" value="Isocitrate_DH_AceK"/>
</dbReference>
<dbReference type="NCBIfam" id="NF002804">
    <property type="entry name" value="PRK02946.1"/>
    <property type="match status" value="1"/>
</dbReference>
<dbReference type="PANTHER" id="PTHR39559">
    <property type="match status" value="1"/>
</dbReference>
<dbReference type="PANTHER" id="PTHR39559:SF1">
    <property type="entry name" value="ISOCITRATE DEHYDROGENASE KINASE_PHOSPHATASE"/>
    <property type="match status" value="1"/>
</dbReference>
<dbReference type="Pfam" id="PF06315">
    <property type="entry name" value="AceK_kinase"/>
    <property type="match status" value="1"/>
</dbReference>
<dbReference type="Pfam" id="PF20423">
    <property type="entry name" value="AceK_regulatory"/>
    <property type="match status" value="1"/>
</dbReference>
<dbReference type="PIRSF" id="PIRSF000719">
    <property type="entry name" value="AceK"/>
    <property type="match status" value="1"/>
</dbReference>
<gene>
    <name evidence="1" type="primary">aceK</name>
    <name type="ordered locus">ECUMN_4542</name>
</gene>
<protein>
    <recommendedName>
        <fullName evidence="1">Isocitrate dehydrogenase kinase/phosphatase</fullName>
        <shortName evidence="1">IDH kinase/phosphatase</shortName>
        <shortName evidence="1">IDHK/P</shortName>
        <ecNumber evidence="1">2.7.11.5</ecNumber>
        <ecNumber evidence="1">3.1.3.-</ecNumber>
    </recommendedName>
</protein>
<keyword id="KW-0067">ATP-binding</keyword>
<keyword id="KW-0963">Cytoplasm</keyword>
<keyword id="KW-0329">Glyoxylate bypass</keyword>
<keyword id="KW-0378">Hydrolase</keyword>
<keyword id="KW-0418">Kinase</keyword>
<keyword id="KW-0547">Nucleotide-binding</keyword>
<keyword id="KW-0904">Protein phosphatase</keyword>
<keyword id="KW-0723">Serine/threonine-protein kinase</keyword>
<keyword id="KW-0808">Transferase</keyword>
<keyword id="KW-0816">Tricarboxylic acid cycle</keyword>
<sequence>MPRGLELLIAQTILQGFDAQYGRFLEVTSGAQQRFEQADWHAVQQAMKNRIHLYDHHVGLVVEQLRCITNGQSTDAAFLLRVKEHYTRLLPDYPRFEIAESFFNSVYCRLFDHRSLTPERLFIFSSQPERRFRTIPRPLAKDFHPDHGWESLLMRVISDLPLRLRWQNKSRDIHYIVRHLTETLGTDNLAESHLQVANELFYRNKAAWLVGKLITPSGTLPFLLPIHQTDDGELFIDTCLTTTAEASIVFGFARSYFMVYAPLPAALVEWLREILPGKTTAELYMAIGCQKHAKTESYREYLVYLQGCNEQFIEAPGIRGMVMLVFTLPGFDRVFKVIKDKFAPQKEMSAAHVRACYQLVKEHDRVGRMADTQEFENFVLEKRHISPALMALLLQEAAEKITDLGEQIVIRHLYIERRMVPLNIWLEQVEGQQLRDAIEEYGNAIRQLAAANIFPGDMLFKNFGVTRHGRVVFYDYDEICYMTEVNFRDIPPPRYPEDELASEPWYSVSPGDVFPEEFRHWLCADPRIGPLFEEMHADLFRADYWRALQNRIRDGHVEDVYAYRRRQRFSVRYGEMLF</sequence>
<proteinExistence type="inferred from homology"/>
<feature type="chain" id="PRO_1000133268" description="Isocitrate dehydrogenase kinase/phosphatase">
    <location>
        <begin position="1"/>
        <end position="578"/>
    </location>
</feature>
<feature type="active site" evidence="1">
    <location>
        <position position="371"/>
    </location>
</feature>
<feature type="binding site" evidence="1">
    <location>
        <begin position="315"/>
        <end position="321"/>
    </location>
    <ligand>
        <name>ATP</name>
        <dbReference type="ChEBI" id="CHEBI:30616"/>
    </ligand>
</feature>
<feature type="binding site" evidence="1">
    <location>
        <position position="336"/>
    </location>
    <ligand>
        <name>ATP</name>
        <dbReference type="ChEBI" id="CHEBI:30616"/>
    </ligand>
</feature>
<evidence type="ECO:0000255" key="1">
    <source>
        <dbReference type="HAMAP-Rule" id="MF_00747"/>
    </source>
</evidence>